<sequence length="760" mass="85580">MLARSVRTLVVSPKTVFRFRGCLFEKHVSTASADDRAIVSLFDSPHAAFKYPSTISTGLFGHSQLSHPNAFISLAEATLVRAQLLTDRILRARSSRDELLKVVKNLDRLSDMLCSVIDLAELIRNAHPDRNWATAGHHVYEQLCEFMNVLNTHVGLYEVLKLVLADASIVKTLSPEAYQTALIFWRDFEKSAINLPPEERQKFVSLSSDILVLGREFLENANAPRPPASIKPEHMVGIKDKGLGVRLQLQAQFTRRDLLVYPGSLQAQMIMRSAPDEEPRRRMYIAANSSTDQQIXTLERLLKTRAELARLVGRSSFAHMTLDDKMAKTPENVMNFLGALIGQTRPFARRALKTLSARKQAHHGLSSLPTIQAWDRDFYCPPEPPAPPIPLPPLTLGTIFMGLSRLFKYLYGITLRPTEAQTGEVWHSDVHKLEVIDEDKGLIGWIYADLFARHGKSSGAAHYTVRCSRRTDLDDDLGDGGLTGHEELIQQNLEFEKVKRHKIPNQDGVYQLPLVVLLCEFTRPSVLKGATVLEWHDVMTLFHEMGHAMLAMVGRTEYQNVSGTRCATDFVELPSILMEHFLSSPVVLSLFDLDGTHSLRQVGNTHEDPCHSIDTFSQIILASLDQIYHSPAVLDNSTFSTTDELENLTVSKGVIPHVPSTSFQTQFGHLFGYGATYYSYLFDRAIASRVWKKVFEKDPLKREVGEKYKLEVLRWGGGRDPWKMVSKLLDASELEKGDAEAMREVGRWRIEDEVGLPGRH</sequence>
<accession>Q6VMB4</accession>
<comment type="function">
    <text evidence="1">Cleaves proteins, imported into the mitochondrion, to their mature size. While most mitochondrial precursor proteins are processed to the mature form in one step by mitochondrial processing peptidase (MPP), the sequential cleavage by MIP of an octapeptide after initial processing by MPP is a required step for a subgroup of nuclear-encoded precursor proteins destined for the matrix or the inner membrane (By similarity).</text>
</comment>
<comment type="catalytic activity">
    <reaction>
        <text>Release of an N-terminal octapeptide as second stage of processing of some proteins imported into the mitochondrion.</text>
        <dbReference type="EC" id="3.4.24.59"/>
    </reaction>
</comment>
<comment type="cofactor">
    <cofactor evidence="1">
        <name>Zn(2+)</name>
        <dbReference type="ChEBI" id="CHEBI:29105"/>
    </cofactor>
    <text evidence="1">Binds 1 zinc ion.</text>
</comment>
<comment type="subcellular location">
    <subcellularLocation>
        <location evidence="1">Mitochondrion matrix</location>
    </subcellularLocation>
</comment>
<comment type="similarity">
    <text evidence="4">Belongs to the peptidase M3 family.</text>
</comment>
<keyword id="KW-0378">Hydrolase</keyword>
<keyword id="KW-0479">Metal-binding</keyword>
<keyword id="KW-0482">Metalloprotease</keyword>
<keyword id="KW-0496">Mitochondrion</keyword>
<keyword id="KW-0645">Protease</keyword>
<keyword id="KW-0809">Transit peptide</keyword>
<keyword id="KW-0862">Zinc</keyword>
<name>PMIP_LEUGO</name>
<feature type="transit peptide" description="Mitochondrion" evidence="2">
    <location>
        <begin position="1"/>
        <end position="19"/>
    </location>
</feature>
<feature type="chain" id="PRO_0000343202" description="Mitochondrial intermediate peptidase">
    <location>
        <begin position="20"/>
        <end position="760"/>
    </location>
</feature>
<feature type="active site" evidence="3">
    <location>
        <position position="544"/>
    </location>
</feature>
<feature type="binding site" evidence="3">
    <location>
        <position position="543"/>
    </location>
    <ligand>
        <name>Zn(2+)</name>
        <dbReference type="ChEBI" id="CHEBI:29105"/>
        <note>catalytic</note>
    </ligand>
</feature>
<feature type="binding site" evidence="3">
    <location>
        <position position="547"/>
    </location>
    <ligand>
        <name>Zn(2+)</name>
        <dbReference type="ChEBI" id="CHEBI:29105"/>
        <note>catalytic</note>
    </ligand>
</feature>
<dbReference type="EC" id="3.4.24.59"/>
<dbReference type="EMBL" id="AY338827">
    <property type="protein sequence ID" value="AAR22310.1"/>
    <property type="molecule type" value="Genomic_DNA"/>
</dbReference>
<dbReference type="GO" id="GO:0005759">
    <property type="term" value="C:mitochondrial matrix"/>
    <property type="evidence" value="ECO:0007669"/>
    <property type="project" value="UniProtKB-SubCell"/>
</dbReference>
<dbReference type="GO" id="GO:0046872">
    <property type="term" value="F:metal ion binding"/>
    <property type="evidence" value="ECO:0007669"/>
    <property type="project" value="UniProtKB-KW"/>
</dbReference>
<dbReference type="GO" id="GO:0004222">
    <property type="term" value="F:metalloendopeptidase activity"/>
    <property type="evidence" value="ECO:0007669"/>
    <property type="project" value="UniProtKB-EC"/>
</dbReference>
<dbReference type="GO" id="GO:0006518">
    <property type="term" value="P:peptide metabolic process"/>
    <property type="evidence" value="ECO:0007669"/>
    <property type="project" value="TreeGrafter"/>
</dbReference>
<dbReference type="GO" id="GO:0006627">
    <property type="term" value="P:protein processing involved in protein targeting to mitochondrion"/>
    <property type="evidence" value="ECO:0007669"/>
    <property type="project" value="TreeGrafter"/>
</dbReference>
<dbReference type="CDD" id="cd06457">
    <property type="entry name" value="M3A_MIP"/>
    <property type="match status" value="1"/>
</dbReference>
<dbReference type="FunFam" id="3.40.390.10:FF:000055">
    <property type="entry name" value="Related to mitochondrial intermediate peptidase"/>
    <property type="match status" value="1"/>
</dbReference>
<dbReference type="Gene3D" id="3.40.390.10">
    <property type="entry name" value="Collagenase (Catalytic Domain)"/>
    <property type="match status" value="1"/>
</dbReference>
<dbReference type="Gene3D" id="1.10.1370.10">
    <property type="entry name" value="Neurolysin, domain 3"/>
    <property type="match status" value="2"/>
</dbReference>
<dbReference type="InterPro" id="IPR033851">
    <property type="entry name" value="M3A_MIP"/>
</dbReference>
<dbReference type="InterPro" id="IPR024079">
    <property type="entry name" value="MetalloPept_cat_dom_sf"/>
</dbReference>
<dbReference type="InterPro" id="IPR024077">
    <property type="entry name" value="Neurolysin/TOP_dom2"/>
</dbReference>
<dbReference type="InterPro" id="IPR045090">
    <property type="entry name" value="Pept_M3A_M3B"/>
</dbReference>
<dbReference type="InterPro" id="IPR001567">
    <property type="entry name" value="Pept_M3A_M3B_dom"/>
</dbReference>
<dbReference type="PANTHER" id="PTHR11804:SF79">
    <property type="entry name" value="MITOCHONDRIAL INTERMEDIATE PEPTIDASE"/>
    <property type="match status" value="1"/>
</dbReference>
<dbReference type="PANTHER" id="PTHR11804">
    <property type="entry name" value="PROTEASE M3 THIMET OLIGOPEPTIDASE-RELATED"/>
    <property type="match status" value="1"/>
</dbReference>
<dbReference type="Pfam" id="PF01432">
    <property type="entry name" value="Peptidase_M3"/>
    <property type="match status" value="1"/>
</dbReference>
<dbReference type="SUPFAM" id="SSF55486">
    <property type="entry name" value="Metalloproteases ('zincins'), catalytic domain"/>
    <property type="match status" value="1"/>
</dbReference>
<dbReference type="PROSITE" id="PS00142">
    <property type="entry name" value="ZINC_PROTEASE"/>
    <property type="match status" value="1"/>
</dbReference>
<protein>
    <recommendedName>
        <fullName>Mitochondrial intermediate peptidase</fullName>
        <shortName>MIP</shortName>
        <ecNumber>3.4.24.59</ecNumber>
    </recommendedName>
    <alternativeName>
        <fullName>Octapeptidyl aminopeptidase</fullName>
    </alternativeName>
</protein>
<proteinExistence type="inferred from homology"/>
<reference key="1">
    <citation type="journal article" date="2004" name="Fungal Genet. Biol.">
        <title>Evolution of the gene encoding mitochondrial intermediate peptidase and its cosegregation with the A mating-type locus of mushroom fungi.</title>
        <authorList>
            <person name="James T.Y."/>
            <person name="Kuees U."/>
            <person name="Rehner S.A."/>
            <person name="Vilgalys R."/>
        </authorList>
    </citation>
    <scope>NUCLEOTIDE SEQUENCE [GENOMIC DNA]</scope>
    <source>
        <strain>SAR 000701-1</strain>
    </source>
</reference>
<organism>
    <name type="scientific">Leucoagaricus gongylophorus</name>
    <name type="common">Leaf-cutting ant fungus</name>
    <dbReference type="NCBI Taxonomy" id="79220"/>
    <lineage>
        <taxon>Eukaryota</taxon>
        <taxon>Fungi</taxon>
        <taxon>Dikarya</taxon>
        <taxon>Basidiomycota</taxon>
        <taxon>Agaricomycotina</taxon>
        <taxon>Agaricomycetes</taxon>
        <taxon>Agaricomycetidae</taxon>
        <taxon>Agaricales</taxon>
        <taxon>Agaricineae</taxon>
        <taxon>Agaricaceae</taxon>
        <taxon>Leucoagaricus</taxon>
    </lineage>
</organism>
<gene>
    <name type="primary">OCT1</name>
    <name type="synonym">MIP</name>
</gene>
<evidence type="ECO:0000250" key="1"/>
<evidence type="ECO:0000255" key="2"/>
<evidence type="ECO:0000255" key="3">
    <source>
        <dbReference type="PROSITE-ProRule" id="PRU10095"/>
    </source>
</evidence>
<evidence type="ECO:0000305" key="4"/>